<accession>P82813</accession>
<name>SIX3_HOTTS</name>
<organism>
    <name type="scientific">Hottentotta tamulus sindicus</name>
    <name type="common">Scorpion</name>
    <name type="synonym">Buthus sindicus</name>
    <dbReference type="NCBI Taxonomy" id="42519"/>
    <lineage>
        <taxon>Eukaryota</taxon>
        <taxon>Metazoa</taxon>
        <taxon>Ecdysozoa</taxon>
        <taxon>Arthropoda</taxon>
        <taxon>Chelicerata</taxon>
        <taxon>Arachnida</taxon>
        <taxon>Scorpiones</taxon>
        <taxon>Buthida</taxon>
        <taxon>Buthoidea</taxon>
        <taxon>Buthidae</taxon>
        <taxon>Mesobuthus</taxon>
    </lineage>
</organism>
<evidence type="ECO:0000255" key="1">
    <source>
        <dbReference type="PROSITE-ProRule" id="PRU01210"/>
    </source>
</evidence>
<evidence type="ECO:0000269" key="2">
    <source>
    </source>
</evidence>
<evidence type="ECO:0000305" key="3"/>
<proteinExistence type="evidence at protein level"/>
<reference key="1">
    <citation type="journal article" date="2001" name="Arch. Biochem. Biophys.">
        <title>Purification, characterization, and primary structure of four depressant insect-selective neurotoxin analogs from scorpion (Buthus sindicus) venom.</title>
        <authorList>
            <person name="Ali S.A."/>
            <person name="Stoeva S."/>
            <person name="Grossmann J.G."/>
            <person name="Abbasi A."/>
            <person name="Voelter W."/>
        </authorList>
    </citation>
    <scope>PROTEIN SEQUENCE</scope>
    <scope>FUNCTION</scope>
    <scope>TOXIC DOSE</scope>
    <scope>MASS SPECTROMETRY</scope>
    <source>
        <tissue>Venom</tissue>
    </source>
</reference>
<protein>
    <recommendedName>
        <fullName>Insect toxin BsIT3</fullName>
        <shortName>Insect toxin 3</shortName>
    </recommendedName>
    <alternativeName>
        <fullName>Bs-dprIT3</fullName>
    </alternativeName>
</protein>
<keyword id="KW-0903">Direct protein sequencing</keyword>
<keyword id="KW-1015">Disulfide bond</keyword>
<keyword id="KW-0872">Ion channel impairing toxin</keyword>
<keyword id="KW-0528">Neurotoxin</keyword>
<keyword id="KW-0964">Secreted</keyword>
<keyword id="KW-0800">Toxin</keyword>
<keyword id="KW-0738">Voltage-gated sodium channel impairing toxin</keyword>
<dbReference type="PIR" id="C59352">
    <property type="entry name" value="C59352"/>
</dbReference>
<dbReference type="SMR" id="P82813"/>
<dbReference type="GO" id="GO:0005576">
    <property type="term" value="C:extracellular region"/>
    <property type="evidence" value="ECO:0007669"/>
    <property type="project" value="UniProtKB-SubCell"/>
</dbReference>
<dbReference type="GO" id="GO:0019871">
    <property type="term" value="F:sodium channel inhibitor activity"/>
    <property type="evidence" value="ECO:0007669"/>
    <property type="project" value="InterPro"/>
</dbReference>
<dbReference type="GO" id="GO:0090729">
    <property type="term" value="F:toxin activity"/>
    <property type="evidence" value="ECO:0007669"/>
    <property type="project" value="UniProtKB-KW"/>
</dbReference>
<dbReference type="GO" id="GO:0006952">
    <property type="term" value="P:defense response"/>
    <property type="evidence" value="ECO:0007669"/>
    <property type="project" value="InterPro"/>
</dbReference>
<dbReference type="CDD" id="cd23106">
    <property type="entry name" value="neurotoxins_LC_scorpion"/>
    <property type="match status" value="1"/>
</dbReference>
<dbReference type="Gene3D" id="3.30.30.10">
    <property type="entry name" value="Knottin, scorpion toxin-like"/>
    <property type="match status" value="1"/>
</dbReference>
<dbReference type="InterPro" id="IPR044062">
    <property type="entry name" value="LCN-type_CS_alpha_beta_dom"/>
</dbReference>
<dbReference type="InterPro" id="IPR003614">
    <property type="entry name" value="Scorpion_toxin-like"/>
</dbReference>
<dbReference type="InterPro" id="IPR036574">
    <property type="entry name" value="Scorpion_toxin-like_sf"/>
</dbReference>
<dbReference type="InterPro" id="IPR018218">
    <property type="entry name" value="Scorpion_toxinL"/>
</dbReference>
<dbReference type="InterPro" id="IPR002061">
    <property type="entry name" value="Scorpion_toxinL/defensin"/>
</dbReference>
<dbReference type="Pfam" id="PF00537">
    <property type="entry name" value="Toxin_3"/>
    <property type="match status" value="1"/>
</dbReference>
<dbReference type="PRINTS" id="PR00285">
    <property type="entry name" value="SCORPNTOXIN"/>
</dbReference>
<dbReference type="SMART" id="SM00505">
    <property type="entry name" value="Knot1"/>
    <property type="match status" value="1"/>
</dbReference>
<dbReference type="SUPFAM" id="SSF57095">
    <property type="entry name" value="Scorpion toxin-like"/>
    <property type="match status" value="1"/>
</dbReference>
<dbReference type="PROSITE" id="PS51863">
    <property type="entry name" value="LCN_CSAB"/>
    <property type="match status" value="1"/>
</dbReference>
<feature type="chain" id="PRO_0000066720" description="Insect toxin BsIT3">
    <location>
        <begin position="1"/>
        <end position="61"/>
    </location>
</feature>
<feature type="domain" description="LCN-type CS-alpha/beta" evidence="1">
    <location>
        <begin position="1"/>
        <end position="61"/>
    </location>
</feature>
<feature type="disulfide bond" evidence="1">
    <location>
        <begin position="10"/>
        <end position="60"/>
    </location>
</feature>
<feature type="disulfide bond" evidence="1">
    <location>
        <begin position="14"/>
        <end position="35"/>
    </location>
</feature>
<feature type="disulfide bond" evidence="1">
    <location>
        <begin position="21"/>
        <end position="42"/>
    </location>
</feature>
<feature type="disulfide bond" evidence="1">
    <location>
        <begin position="25"/>
        <end position="44"/>
    </location>
</feature>
<sequence length="61" mass="6715">DGYILNSKGCKVSCVVSIVYCNSMCKSSGGSYGYCWTWGLACWCEGLPNSKRWTSSKNKCN</sequence>
<comment type="function">
    <text evidence="2">Depressant insect beta-toxins cause a transient contraction paralysis followed by a slow flaccid paralysis. They bind voltage-independently at site-4 of sodium channels (Nav) and shift the voltage of activation toward more negative potentials thereby affecting sodium channel activation and promoting spontaneous and repetitive firing. This toxin is active only on insects.</text>
</comment>
<comment type="subcellular location">
    <subcellularLocation>
        <location>Secreted</location>
    </subcellularLocation>
</comment>
<comment type="tissue specificity">
    <text>Expressed by the venom gland.</text>
</comment>
<comment type="domain">
    <text evidence="3">Has the structural arrangement of an alpha-helix connected to antiparallel beta-sheets by disulfide bonds (CS-alpha/beta).</text>
</comment>
<comment type="mass spectrometry" mass="6714.7" method="Electrospray" evidence="2"/>
<comment type="toxic dose">
    <text evidence="2">LD(50) is 163 ng/100 mg of body weight of cockroach (B.germanica) and 103 ng/100 mg of body weight of blowfly larvae (S.falculata).</text>
</comment>
<comment type="similarity">
    <text evidence="3">Belongs to the long (4 C-C) scorpion toxin superfamily. Sodium channel inhibitor family. Beta subfamily.</text>
</comment>